<evidence type="ECO:0000250" key="1"/>
<evidence type="ECO:0000250" key="2">
    <source>
        <dbReference type="UniProtKB" id="P00157"/>
    </source>
</evidence>
<evidence type="ECO:0000255" key="3">
    <source>
        <dbReference type="PROSITE-ProRule" id="PRU00968"/>
    </source>
</evidence>
<comment type="function">
    <text evidence="2">Component of the ubiquinol-cytochrome c reductase complex (complex III or cytochrome b-c1 complex) that is part of the mitochondrial respiratory chain. The b-c1 complex mediates electron transfer from ubiquinol to cytochrome c. Contributes to the generation of a proton gradient across the mitochondrial membrane that is then used for ATP synthesis.</text>
</comment>
<comment type="cofactor">
    <cofactor evidence="2">
        <name>heme b</name>
        <dbReference type="ChEBI" id="CHEBI:60344"/>
    </cofactor>
    <text evidence="2">Binds 2 heme b groups non-covalently.</text>
</comment>
<comment type="subunit">
    <text evidence="2">The cytochrome bc1 complex contains 11 subunits: 3 respiratory subunits (MT-CYB, CYC1 and UQCRFS1), 2 core proteins (UQCRC1 and UQCRC2) and 6 low-molecular weight proteins (UQCRH/QCR6, UQCRB/QCR7, UQCRQ/QCR8, UQCR10/QCR9, UQCR11/QCR10 and a cleavage product of UQCRFS1). This cytochrome bc1 complex then forms a dimer.</text>
</comment>
<comment type="subcellular location">
    <subcellularLocation>
        <location evidence="2">Mitochondrion inner membrane</location>
        <topology evidence="2">Multi-pass membrane protein</topology>
    </subcellularLocation>
</comment>
<comment type="miscellaneous">
    <text evidence="1">Heme 1 (or BL or b562) is low-potential and absorbs at about 562 nm, and heme 2 (or BH or b566) is high-potential and absorbs at about 566 nm.</text>
</comment>
<comment type="similarity">
    <text evidence="3">Belongs to the cytochrome b family.</text>
</comment>
<comment type="caution">
    <text evidence="2">The full-length protein contains only eight transmembrane helices, not nine as predicted by bioinformatics tools.</text>
</comment>
<dbReference type="EMBL" id="AF044660">
    <property type="protein sequence ID" value="AAD05413.1"/>
    <property type="molecule type" value="Genomic_DNA"/>
</dbReference>
<dbReference type="SMR" id="O99468"/>
<dbReference type="GO" id="GO:0005743">
    <property type="term" value="C:mitochondrial inner membrane"/>
    <property type="evidence" value="ECO:0007669"/>
    <property type="project" value="UniProtKB-SubCell"/>
</dbReference>
<dbReference type="GO" id="GO:0046872">
    <property type="term" value="F:metal ion binding"/>
    <property type="evidence" value="ECO:0007669"/>
    <property type="project" value="UniProtKB-KW"/>
</dbReference>
<dbReference type="GO" id="GO:0008121">
    <property type="term" value="F:ubiquinol-cytochrome-c reductase activity"/>
    <property type="evidence" value="ECO:0007669"/>
    <property type="project" value="TreeGrafter"/>
</dbReference>
<dbReference type="GO" id="GO:0006122">
    <property type="term" value="P:mitochondrial electron transport, ubiquinol to cytochrome c"/>
    <property type="evidence" value="ECO:0007669"/>
    <property type="project" value="TreeGrafter"/>
</dbReference>
<dbReference type="CDD" id="cd00284">
    <property type="entry name" value="Cytochrome_b_N"/>
    <property type="match status" value="1"/>
</dbReference>
<dbReference type="Gene3D" id="1.20.810.10">
    <property type="entry name" value="Cytochrome Bc1 Complex, Chain C"/>
    <property type="match status" value="1"/>
</dbReference>
<dbReference type="InterPro" id="IPR005797">
    <property type="entry name" value="Cyt_b/b6_N"/>
</dbReference>
<dbReference type="InterPro" id="IPR027387">
    <property type="entry name" value="Cytb/b6-like_sf"/>
</dbReference>
<dbReference type="InterPro" id="IPR048259">
    <property type="entry name" value="Cytochrome_b_N_euk/bac"/>
</dbReference>
<dbReference type="InterPro" id="IPR016174">
    <property type="entry name" value="Di-haem_cyt_TM"/>
</dbReference>
<dbReference type="PANTHER" id="PTHR19271">
    <property type="entry name" value="CYTOCHROME B"/>
    <property type="match status" value="1"/>
</dbReference>
<dbReference type="PANTHER" id="PTHR19271:SF16">
    <property type="entry name" value="CYTOCHROME B"/>
    <property type="match status" value="1"/>
</dbReference>
<dbReference type="Pfam" id="PF00033">
    <property type="entry name" value="Cytochrome_B"/>
    <property type="match status" value="1"/>
</dbReference>
<dbReference type="SUPFAM" id="SSF81342">
    <property type="entry name" value="Transmembrane di-heme cytochromes"/>
    <property type="match status" value="1"/>
</dbReference>
<dbReference type="PROSITE" id="PS51002">
    <property type="entry name" value="CYTB_NTER"/>
    <property type="match status" value="1"/>
</dbReference>
<reference key="1">
    <citation type="submission" date="1998-01" db="EMBL/GenBank/DDBJ databases">
        <title>Mitochondrial phylogeography and morphological recurrence in African fruitbats.</title>
        <authorList>
            <person name="Bautista J.M."/>
            <person name="Alvarez Y."/>
            <person name="Juste J."/>
        </authorList>
    </citation>
    <scope>NUCLEOTIDE SEQUENCE [GENOMIC DNA]</scope>
</reference>
<accession>O99468</accession>
<organism>
    <name type="scientific">Rhinolophus hipposideros</name>
    <name type="common">Lesser horseshoe bat</name>
    <dbReference type="NCBI Taxonomy" id="77218"/>
    <lineage>
        <taxon>Eukaryota</taxon>
        <taxon>Metazoa</taxon>
        <taxon>Chordata</taxon>
        <taxon>Craniata</taxon>
        <taxon>Vertebrata</taxon>
        <taxon>Euteleostomi</taxon>
        <taxon>Mammalia</taxon>
        <taxon>Eutheria</taxon>
        <taxon>Laurasiatheria</taxon>
        <taxon>Chiroptera</taxon>
        <taxon>Yinpterochiroptera</taxon>
        <taxon>Rhinolophoidea</taxon>
        <taxon>Rhinolophidae</taxon>
        <taxon>Rhinolophinae</taxon>
        <taxon>Rhinolophus</taxon>
    </lineage>
</organism>
<geneLocation type="mitochondrion"/>
<name>CYB_RHIHI</name>
<sequence length="134" mass="15159">MTNIRKSHPLFKIINDSFIDLPTPSSISSWWNFGSLLGVCLATQILTGLFLAMHYTSDTDTAFHSVTHICRDVNYGWILRYLHANGASMFFICLFLHVGRGIYYGSYTFSETWNIGIILLFAVMATAFMGYVLP</sequence>
<proteinExistence type="inferred from homology"/>
<protein>
    <recommendedName>
        <fullName>Cytochrome b</fullName>
    </recommendedName>
    <alternativeName>
        <fullName>Complex III subunit 3</fullName>
    </alternativeName>
    <alternativeName>
        <fullName>Complex III subunit III</fullName>
    </alternativeName>
    <alternativeName>
        <fullName>Cytochrome b-c1 complex subunit 3</fullName>
    </alternativeName>
    <alternativeName>
        <fullName>Ubiquinol-cytochrome-c reductase complex cytochrome b subunit</fullName>
    </alternativeName>
</protein>
<keyword id="KW-0249">Electron transport</keyword>
<keyword id="KW-0349">Heme</keyword>
<keyword id="KW-0408">Iron</keyword>
<keyword id="KW-0472">Membrane</keyword>
<keyword id="KW-0479">Metal-binding</keyword>
<keyword id="KW-0496">Mitochondrion</keyword>
<keyword id="KW-0999">Mitochondrion inner membrane</keyword>
<keyword id="KW-0679">Respiratory chain</keyword>
<keyword id="KW-0812">Transmembrane</keyword>
<keyword id="KW-1133">Transmembrane helix</keyword>
<keyword id="KW-0813">Transport</keyword>
<keyword id="KW-0830">Ubiquinone</keyword>
<gene>
    <name type="primary">MT-CYB</name>
    <name type="synonym">COB</name>
    <name type="synonym">CYTB</name>
    <name type="synonym">MTCYB</name>
</gene>
<feature type="chain" id="PRO_0000061498" description="Cytochrome b">
    <location>
        <begin position="1"/>
        <end position="134" status="greater than"/>
    </location>
</feature>
<feature type="transmembrane region" description="Helical" evidence="2">
    <location>
        <begin position="33"/>
        <end position="53"/>
    </location>
</feature>
<feature type="transmembrane region" description="Helical" evidence="2">
    <location>
        <begin position="77"/>
        <end position="98"/>
    </location>
</feature>
<feature type="transmembrane region" description="Helical" evidence="2">
    <location>
        <begin position="113"/>
        <end position="133"/>
    </location>
</feature>
<feature type="binding site" description="axial binding residue" evidence="2">
    <location>
        <position position="83"/>
    </location>
    <ligand>
        <name>heme b</name>
        <dbReference type="ChEBI" id="CHEBI:60344"/>
        <label>b562</label>
    </ligand>
    <ligandPart>
        <name>Fe</name>
        <dbReference type="ChEBI" id="CHEBI:18248"/>
    </ligandPart>
</feature>
<feature type="binding site" description="axial binding residue" evidence="2">
    <location>
        <position position="97"/>
    </location>
    <ligand>
        <name>heme b</name>
        <dbReference type="ChEBI" id="CHEBI:60344"/>
        <label>b566</label>
    </ligand>
    <ligandPart>
        <name>Fe</name>
        <dbReference type="ChEBI" id="CHEBI:18248"/>
    </ligandPart>
</feature>
<feature type="non-terminal residue">
    <location>
        <position position="134"/>
    </location>
</feature>